<organism>
    <name type="scientific">Buchnera aphidicola subsp. Acyrthosiphon pisum (strain 5A)</name>
    <dbReference type="NCBI Taxonomy" id="563178"/>
    <lineage>
        <taxon>Bacteria</taxon>
        <taxon>Pseudomonadati</taxon>
        <taxon>Pseudomonadota</taxon>
        <taxon>Gammaproteobacteria</taxon>
        <taxon>Enterobacterales</taxon>
        <taxon>Erwiniaceae</taxon>
        <taxon>Buchnera</taxon>
    </lineage>
</organism>
<comment type="function">
    <text evidence="1">Catalyzes the ATP-dependent phosphorylation of L-homoserine to L-homoserine phosphate.</text>
</comment>
<comment type="catalytic activity">
    <reaction evidence="1">
        <text>L-homoserine + ATP = O-phospho-L-homoserine + ADP + H(+)</text>
        <dbReference type="Rhea" id="RHEA:13985"/>
        <dbReference type="ChEBI" id="CHEBI:15378"/>
        <dbReference type="ChEBI" id="CHEBI:30616"/>
        <dbReference type="ChEBI" id="CHEBI:57476"/>
        <dbReference type="ChEBI" id="CHEBI:57590"/>
        <dbReference type="ChEBI" id="CHEBI:456216"/>
        <dbReference type="EC" id="2.7.1.39"/>
    </reaction>
</comment>
<comment type="pathway">
    <text evidence="1">Amino-acid biosynthesis; L-threonine biosynthesis; L-threonine from L-aspartate: step 4/5.</text>
</comment>
<comment type="subcellular location">
    <subcellularLocation>
        <location evidence="1">Cytoplasm</location>
    </subcellularLocation>
</comment>
<comment type="similarity">
    <text evidence="1">Belongs to the GHMP kinase family. Homoserine kinase subfamily.</text>
</comment>
<evidence type="ECO:0000255" key="1">
    <source>
        <dbReference type="HAMAP-Rule" id="MF_00384"/>
    </source>
</evidence>
<gene>
    <name evidence="1" type="primary">thrB</name>
    <name type="ordered locus">BUAP5A_190</name>
</gene>
<proteinExistence type="inferred from homology"/>
<reference key="1">
    <citation type="journal article" date="2009" name="Science">
        <title>The dynamics and time scale of ongoing genomic erosion in symbiotic bacteria.</title>
        <authorList>
            <person name="Moran N.A."/>
            <person name="McLaughlin H.J."/>
            <person name="Sorek R."/>
        </authorList>
    </citation>
    <scope>NUCLEOTIDE SEQUENCE [LARGE SCALE GENOMIC DNA]</scope>
    <source>
        <strain>5A</strain>
    </source>
</reference>
<name>KHSE_BUCA5</name>
<keyword id="KW-0028">Amino-acid biosynthesis</keyword>
<keyword id="KW-0067">ATP-binding</keyword>
<keyword id="KW-0963">Cytoplasm</keyword>
<keyword id="KW-0418">Kinase</keyword>
<keyword id="KW-0547">Nucleotide-binding</keyword>
<keyword id="KW-0791">Threonine biosynthesis</keyword>
<keyword id="KW-0808">Transferase</keyword>
<protein>
    <recommendedName>
        <fullName evidence="1">Homoserine kinase</fullName>
        <shortName evidence="1">HK</shortName>
        <shortName evidence="1">HSK</shortName>
        <ecNumber evidence="1">2.7.1.39</ecNumber>
    </recommendedName>
</protein>
<accession>B8D8Z2</accession>
<feature type="chain" id="PRO_1000134242" description="Homoserine kinase">
    <location>
        <begin position="1"/>
        <end position="309"/>
    </location>
</feature>
<feature type="binding site" evidence="1">
    <location>
        <begin position="91"/>
        <end position="101"/>
    </location>
    <ligand>
        <name>ATP</name>
        <dbReference type="ChEBI" id="CHEBI:30616"/>
    </ligand>
</feature>
<sequence>MIKIYAPASIGNVGVGFDILGAAIIPINGSLLGDFVTVKLSNKFNLVNKGIFSNKLPKNTEQNIVWKCWLKFCNTIKRNIPVSIILEKNMPIGSGLGSSACSIVATLVAMNEFCDKPLNSKELLLLMGEVEGEISGSIHYDNVAPCYLGGLQLILEDSKIISQTIPNFKNWFWIVAWPGTKVPTAEARDILPKKYKKETCIKNSRYLAGFIHASYSQQPHLAARLMQDFIAEPYRIKLLPNYLYVKEKIKKIGAISSGISGSGPTIFSISDNINTAQKISAWLTENYLQNTTGFVHICFLDSKGVRKIG</sequence>
<dbReference type="EC" id="2.7.1.39" evidence="1"/>
<dbReference type="EMBL" id="CP001161">
    <property type="protein sequence ID" value="ACL30563.1"/>
    <property type="molecule type" value="Genomic_DNA"/>
</dbReference>
<dbReference type="RefSeq" id="WP_009874150.1">
    <property type="nucleotide sequence ID" value="NC_011833.1"/>
</dbReference>
<dbReference type="SMR" id="B8D8Z2"/>
<dbReference type="KEGG" id="bap:BUAP5A_190"/>
<dbReference type="HOGENOM" id="CLU_041243_1_1_6"/>
<dbReference type="OrthoDB" id="9769912at2"/>
<dbReference type="UniPathway" id="UPA00050">
    <property type="reaction ID" value="UER00064"/>
</dbReference>
<dbReference type="Proteomes" id="UP000006904">
    <property type="component" value="Chromosome"/>
</dbReference>
<dbReference type="GO" id="GO:0005737">
    <property type="term" value="C:cytoplasm"/>
    <property type="evidence" value="ECO:0007669"/>
    <property type="project" value="UniProtKB-SubCell"/>
</dbReference>
<dbReference type="GO" id="GO:0005524">
    <property type="term" value="F:ATP binding"/>
    <property type="evidence" value="ECO:0007669"/>
    <property type="project" value="UniProtKB-UniRule"/>
</dbReference>
<dbReference type="GO" id="GO:0004413">
    <property type="term" value="F:homoserine kinase activity"/>
    <property type="evidence" value="ECO:0007669"/>
    <property type="project" value="UniProtKB-UniRule"/>
</dbReference>
<dbReference type="GO" id="GO:0009088">
    <property type="term" value="P:threonine biosynthetic process"/>
    <property type="evidence" value="ECO:0007669"/>
    <property type="project" value="UniProtKB-UniRule"/>
</dbReference>
<dbReference type="Gene3D" id="3.30.230.10">
    <property type="match status" value="1"/>
</dbReference>
<dbReference type="Gene3D" id="3.30.70.890">
    <property type="entry name" value="GHMP kinase, C-terminal domain"/>
    <property type="match status" value="1"/>
</dbReference>
<dbReference type="HAMAP" id="MF_00384">
    <property type="entry name" value="Homoser_kinase"/>
    <property type="match status" value="1"/>
</dbReference>
<dbReference type="InterPro" id="IPR013750">
    <property type="entry name" value="GHMP_kinase_C_dom"/>
</dbReference>
<dbReference type="InterPro" id="IPR036554">
    <property type="entry name" value="GHMP_kinase_C_sf"/>
</dbReference>
<dbReference type="InterPro" id="IPR006204">
    <property type="entry name" value="GHMP_kinase_N_dom"/>
</dbReference>
<dbReference type="InterPro" id="IPR006203">
    <property type="entry name" value="GHMP_knse_ATP-bd_CS"/>
</dbReference>
<dbReference type="InterPro" id="IPR000870">
    <property type="entry name" value="Homoserine_kinase"/>
</dbReference>
<dbReference type="InterPro" id="IPR020568">
    <property type="entry name" value="Ribosomal_Su5_D2-typ_SF"/>
</dbReference>
<dbReference type="InterPro" id="IPR014721">
    <property type="entry name" value="Ribsml_uS5_D2-typ_fold_subgr"/>
</dbReference>
<dbReference type="NCBIfam" id="NF002288">
    <property type="entry name" value="PRK01212.1-4"/>
    <property type="match status" value="1"/>
</dbReference>
<dbReference type="NCBIfam" id="TIGR00191">
    <property type="entry name" value="thrB"/>
    <property type="match status" value="1"/>
</dbReference>
<dbReference type="PANTHER" id="PTHR20861:SF1">
    <property type="entry name" value="HOMOSERINE KINASE"/>
    <property type="match status" value="1"/>
</dbReference>
<dbReference type="PANTHER" id="PTHR20861">
    <property type="entry name" value="HOMOSERINE/4-DIPHOSPHOCYTIDYL-2-C-METHYL-D-ERYTHRITOL KINASE"/>
    <property type="match status" value="1"/>
</dbReference>
<dbReference type="Pfam" id="PF08544">
    <property type="entry name" value="GHMP_kinases_C"/>
    <property type="match status" value="1"/>
</dbReference>
<dbReference type="Pfam" id="PF00288">
    <property type="entry name" value="GHMP_kinases_N"/>
    <property type="match status" value="1"/>
</dbReference>
<dbReference type="PIRSF" id="PIRSF000676">
    <property type="entry name" value="Homoser_kin"/>
    <property type="match status" value="1"/>
</dbReference>
<dbReference type="PRINTS" id="PR00958">
    <property type="entry name" value="HOMSERKINASE"/>
</dbReference>
<dbReference type="SUPFAM" id="SSF55060">
    <property type="entry name" value="GHMP Kinase, C-terminal domain"/>
    <property type="match status" value="1"/>
</dbReference>
<dbReference type="SUPFAM" id="SSF54211">
    <property type="entry name" value="Ribosomal protein S5 domain 2-like"/>
    <property type="match status" value="1"/>
</dbReference>
<dbReference type="PROSITE" id="PS00627">
    <property type="entry name" value="GHMP_KINASES_ATP"/>
    <property type="match status" value="1"/>
</dbReference>